<reference key="1">
    <citation type="journal article" date="1993" name="Mol. Microbiol.">
        <title>Identification of a new nuclear gene (CEM1) encoding a protein homologous to a beta-keto-acyl synthase which is essential for mitochondrial respiration in Saccharomyces cerevisiae.</title>
        <authorList>
            <person name="Harington A."/>
            <person name="Herbert C.J."/>
            <person name="Tung B."/>
            <person name="Getz G.S."/>
            <person name="Slonimski P.P."/>
        </authorList>
    </citation>
    <scope>NUCLEOTIDE SEQUENCE [GENOMIC DNA]</scope>
    <source>
        <strain>CW04</strain>
    </source>
</reference>
<reference key="2">
    <citation type="journal article" date="1997" name="Nature">
        <title>The nucleotide sequence of Saccharomyces cerevisiae chromosome V.</title>
        <authorList>
            <person name="Dietrich F.S."/>
            <person name="Mulligan J.T."/>
            <person name="Hennessy K.M."/>
            <person name="Yelton M.A."/>
            <person name="Allen E."/>
            <person name="Araujo R."/>
            <person name="Aviles E."/>
            <person name="Berno A."/>
            <person name="Brennan T."/>
            <person name="Carpenter J."/>
            <person name="Chen E."/>
            <person name="Cherry J.M."/>
            <person name="Chung E."/>
            <person name="Duncan M."/>
            <person name="Guzman E."/>
            <person name="Hartzell G."/>
            <person name="Hunicke-Smith S."/>
            <person name="Hyman R.W."/>
            <person name="Kayser A."/>
            <person name="Komp C."/>
            <person name="Lashkari D."/>
            <person name="Lew H."/>
            <person name="Lin D."/>
            <person name="Mosedale D."/>
            <person name="Nakahara K."/>
            <person name="Namath A."/>
            <person name="Norgren R."/>
            <person name="Oefner P."/>
            <person name="Oh C."/>
            <person name="Petel F.X."/>
            <person name="Roberts D."/>
            <person name="Sehl P."/>
            <person name="Schramm S."/>
            <person name="Shogren T."/>
            <person name="Smith V."/>
            <person name="Taylor P."/>
            <person name="Wei Y."/>
            <person name="Botstein D."/>
            <person name="Davis R.W."/>
        </authorList>
    </citation>
    <scope>NUCLEOTIDE SEQUENCE [LARGE SCALE GENOMIC DNA]</scope>
    <source>
        <strain>ATCC 204508 / S288c</strain>
    </source>
</reference>
<reference key="3">
    <citation type="journal article" date="2014" name="G3 (Bethesda)">
        <title>The reference genome sequence of Saccharomyces cerevisiae: Then and now.</title>
        <authorList>
            <person name="Engel S.R."/>
            <person name="Dietrich F.S."/>
            <person name="Fisk D.G."/>
            <person name="Binkley G."/>
            <person name="Balakrishnan R."/>
            <person name="Costanzo M.C."/>
            <person name="Dwight S.S."/>
            <person name="Hitz B.C."/>
            <person name="Karra K."/>
            <person name="Nash R.S."/>
            <person name="Weng S."/>
            <person name="Wong E.D."/>
            <person name="Lloyd P."/>
            <person name="Skrzypek M.S."/>
            <person name="Miyasato S.R."/>
            <person name="Simison M."/>
            <person name="Cherry J.M."/>
        </authorList>
    </citation>
    <scope>GENOME REANNOTATION</scope>
    <source>
        <strain>ATCC 204508 / S288c</strain>
    </source>
</reference>
<reference key="4">
    <citation type="journal article" date="2003" name="Nature">
        <title>Global analysis of protein localization in budding yeast.</title>
        <authorList>
            <person name="Huh W.-K."/>
            <person name="Falvo J.V."/>
            <person name="Gerke L.C."/>
            <person name="Carroll A.S."/>
            <person name="Howson R.W."/>
            <person name="Weissman J.S."/>
            <person name="O'Shea E.K."/>
        </authorList>
    </citation>
    <scope>SUBCELLULAR LOCATION [LARGE SCALE ANALYSIS]</scope>
</reference>
<reference key="5">
    <citation type="journal article" date="2003" name="Nature">
        <title>Global analysis of protein expression in yeast.</title>
        <authorList>
            <person name="Ghaemmaghami S."/>
            <person name="Huh W.-K."/>
            <person name="Bower K."/>
            <person name="Howson R.W."/>
            <person name="Belle A."/>
            <person name="Dephoure N."/>
            <person name="O'Shea E.K."/>
            <person name="Weissman J.S."/>
        </authorList>
    </citation>
    <scope>LEVEL OF PROTEIN EXPRESSION [LARGE SCALE ANALYSIS]</scope>
</reference>
<reference key="6">
    <citation type="journal article" date="2006" name="J. Proteome Res.">
        <title>Toward the complete yeast mitochondrial proteome: multidimensional separation techniques for mitochondrial proteomics.</title>
        <authorList>
            <person name="Reinders J."/>
            <person name="Zahedi R.P."/>
            <person name="Pfanner N."/>
            <person name="Meisinger C."/>
            <person name="Sickmann A."/>
        </authorList>
    </citation>
    <scope>SUBCELLULAR LOCATION [LARGE SCALE ANALYSIS]</scope>
    <scope>IDENTIFICATION BY MASS SPECTROMETRY</scope>
</reference>
<sequence length="442" mass="47555">MSRRVVITGLGCVTPLGRSLSESWGNLLSSKNGLTPITSLPNYNEDYKLREKSIPSTITVGKIPENFQNENSAINKLLFTSQDERRTSSFIKLALRTTYEALHNAGLLNPNDITINTSLCNLDHFGCLIGSGIGSIQDIYQTSLQFHNDNKRINPYFVPKILTNMAAGNVSIKFNLRGLSHSVSTACATGNNSIGDAFNFIRLGMQDICVAGASETSLHPLSLAGFIRAKSITTNGISRPFDTQRSGFVLGEGCGMIVMESLEHAQKRNANIISELVGYGLSSDACHITSPPADGNGAKRAIEMALKMARLEPTDVDYVNAHATSTLLGDKAECLAVASALLPGRSKSKPLYISSNKGAIGHLLGAAGAVESIFTICSLKDDKMPHTLNLDNVLTLENNEADKLHFIRDKPIVGANPKYALCNSFGFGGVNTSLLFKKWEGS</sequence>
<proteinExistence type="evidence at protein level"/>
<gene>
    <name type="primary">CEM1</name>
    <name type="ordered locus">YER061C</name>
</gene>
<organism>
    <name type="scientific">Saccharomyces cerevisiae (strain ATCC 204508 / S288c)</name>
    <name type="common">Baker's yeast</name>
    <dbReference type="NCBI Taxonomy" id="559292"/>
    <lineage>
        <taxon>Eukaryota</taxon>
        <taxon>Fungi</taxon>
        <taxon>Dikarya</taxon>
        <taxon>Ascomycota</taxon>
        <taxon>Saccharomycotina</taxon>
        <taxon>Saccharomycetes</taxon>
        <taxon>Saccharomycetales</taxon>
        <taxon>Saccharomycetaceae</taxon>
        <taxon>Saccharomyces</taxon>
    </lineage>
</organism>
<dbReference type="EC" id="2.3.1.41"/>
<dbReference type="EMBL" id="X73488">
    <property type="protein sequence ID" value="CAB58180.1"/>
    <property type="molecule type" value="Genomic_DNA"/>
</dbReference>
<dbReference type="EMBL" id="U18813">
    <property type="protein sequence ID" value="AAB64597.1"/>
    <property type="molecule type" value="Genomic_DNA"/>
</dbReference>
<dbReference type="EMBL" id="BK006939">
    <property type="protein sequence ID" value="DAA07720.2"/>
    <property type="molecule type" value="Genomic_DNA"/>
</dbReference>
<dbReference type="PIR" id="S36204">
    <property type="entry name" value="S36204"/>
</dbReference>
<dbReference type="RefSeq" id="NP_010983.2">
    <property type="nucleotide sequence ID" value="NM_001178952.2"/>
</dbReference>
<dbReference type="SMR" id="P39525"/>
<dbReference type="BioGRID" id="36803">
    <property type="interactions" value="507"/>
</dbReference>
<dbReference type="DIP" id="DIP-5342N"/>
<dbReference type="FunCoup" id="P39525">
    <property type="interactions" value="557"/>
</dbReference>
<dbReference type="IntAct" id="P39525">
    <property type="interactions" value="4"/>
</dbReference>
<dbReference type="MINT" id="P39525"/>
<dbReference type="STRING" id="4932.YER061C"/>
<dbReference type="PaxDb" id="4932-YER061C"/>
<dbReference type="PeptideAtlas" id="P39525"/>
<dbReference type="EnsemblFungi" id="YER061C_mRNA">
    <property type="protein sequence ID" value="YER061C"/>
    <property type="gene ID" value="YER061C"/>
</dbReference>
<dbReference type="GeneID" id="856790"/>
<dbReference type="KEGG" id="sce:YER061C"/>
<dbReference type="AGR" id="SGD:S000000863"/>
<dbReference type="SGD" id="S000000863">
    <property type="gene designation" value="CEM1"/>
</dbReference>
<dbReference type="VEuPathDB" id="FungiDB:YER061C"/>
<dbReference type="eggNOG" id="KOG1394">
    <property type="taxonomic scope" value="Eukaryota"/>
</dbReference>
<dbReference type="GeneTree" id="ENSGT00940000157768"/>
<dbReference type="HOGENOM" id="CLU_000022_69_2_1"/>
<dbReference type="InParanoid" id="P39525"/>
<dbReference type="OMA" id="QIGHCLG"/>
<dbReference type="OrthoDB" id="5334845at2759"/>
<dbReference type="BioCyc" id="MetaCyc:YER061C-MONOMER"/>
<dbReference type="BioCyc" id="YEAST:YER061C-MONOMER"/>
<dbReference type="Reactome" id="R-SCE-9837999">
    <property type="pathway name" value="Mitochondrial protein degradation"/>
</dbReference>
<dbReference type="BioGRID-ORCS" id="856790">
    <property type="hits" value="6 hits in 10 CRISPR screens"/>
</dbReference>
<dbReference type="PRO" id="PR:P39525"/>
<dbReference type="Proteomes" id="UP000002311">
    <property type="component" value="Chromosome V"/>
</dbReference>
<dbReference type="RNAct" id="P39525">
    <property type="molecule type" value="protein"/>
</dbReference>
<dbReference type="GO" id="GO:0005739">
    <property type="term" value="C:mitochondrion"/>
    <property type="evidence" value="ECO:0007005"/>
    <property type="project" value="SGD"/>
</dbReference>
<dbReference type="GO" id="GO:0004315">
    <property type="term" value="F:3-oxoacyl-[acyl-carrier-protein] synthase activity"/>
    <property type="evidence" value="ECO:0000247"/>
    <property type="project" value="SGD"/>
</dbReference>
<dbReference type="GO" id="GO:0006633">
    <property type="term" value="P:fatty acid biosynthetic process"/>
    <property type="evidence" value="ECO:0000247"/>
    <property type="project" value="SGD"/>
</dbReference>
<dbReference type="CDD" id="cd00834">
    <property type="entry name" value="KAS_I_II"/>
    <property type="match status" value="1"/>
</dbReference>
<dbReference type="FunFam" id="3.40.47.10:FF:000009">
    <property type="entry name" value="3-oxoacyl-[acyl-carrier-protein] synthase 2"/>
    <property type="match status" value="1"/>
</dbReference>
<dbReference type="Gene3D" id="3.40.47.10">
    <property type="match status" value="1"/>
</dbReference>
<dbReference type="InterPro" id="IPR000794">
    <property type="entry name" value="Beta-ketoacyl_synthase"/>
</dbReference>
<dbReference type="InterPro" id="IPR018201">
    <property type="entry name" value="Ketoacyl_synth_AS"/>
</dbReference>
<dbReference type="InterPro" id="IPR014031">
    <property type="entry name" value="Ketoacyl_synth_C"/>
</dbReference>
<dbReference type="InterPro" id="IPR014030">
    <property type="entry name" value="Ketoacyl_synth_N"/>
</dbReference>
<dbReference type="InterPro" id="IPR020841">
    <property type="entry name" value="PKS_Beta-ketoAc_synthase_dom"/>
</dbReference>
<dbReference type="InterPro" id="IPR016039">
    <property type="entry name" value="Thiolase-like"/>
</dbReference>
<dbReference type="NCBIfam" id="NF005589">
    <property type="entry name" value="PRK07314.1"/>
    <property type="match status" value="1"/>
</dbReference>
<dbReference type="PANTHER" id="PTHR11712:SF336">
    <property type="entry name" value="3-OXOACYL-[ACYL-CARRIER-PROTEIN] SYNTHASE, MITOCHONDRIAL"/>
    <property type="match status" value="1"/>
</dbReference>
<dbReference type="PANTHER" id="PTHR11712">
    <property type="entry name" value="POLYKETIDE SYNTHASE-RELATED"/>
    <property type="match status" value="1"/>
</dbReference>
<dbReference type="Pfam" id="PF00109">
    <property type="entry name" value="ketoacyl-synt"/>
    <property type="match status" value="1"/>
</dbReference>
<dbReference type="Pfam" id="PF02801">
    <property type="entry name" value="Ketoacyl-synt_C"/>
    <property type="match status" value="1"/>
</dbReference>
<dbReference type="SMART" id="SM00825">
    <property type="entry name" value="PKS_KS"/>
    <property type="match status" value="1"/>
</dbReference>
<dbReference type="SUPFAM" id="SSF53901">
    <property type="entry name" value="Thiolase-like"/>
    <property type="match status" value="1"/>
</dbReference>
<dbReference type="PROSITE" id="PS00606">
    <property type="entry name" value="KS3_1"/>
    <property type="match status" value="1"/>
</dbReference>
<dbReference type="PROSITE" id="PS52004">
    <property type="entry name" value="KS3_2"/>
    <property type="match status" value="1"/>
</dbReference>
<protein>
    <recommendedName>
        <fullName>3-oxoacyl-[acyl-carrier-protein] synthase homolog</fullName>
        <ecNumber>2.3.1.41</ecNumber>
    </recommendedName>
    <alternativeName>
        <fullName>Beta-ketoacyl-ACP synthase homolog</fullName>
    </alternativeName>
</protein>
<evidence type="ECO:0000255" key="1">
    <source>
        <dbReference type="PROSITE-ProRule" id="PRU01348"/>
    </source>
</evidence>
<evidence type="ECO:0000269" key="2">
    <source>
    </source>
</evidence>
<evidence type="ECO:0000269" key="3">
    <source>
    </source>
</evidence>
<evidence type="ECO:0000269" key="4">
    <source>
    </source>
</evidence>
<evidence type="ECO:0000305" key="5"/>
<feature type="chain" id="PRO_0000180356" description="3-oxoacyl-[acyl-carrier-protein] synthase homolog">
    <location>
        <begin position="1"/>
        <end position="442"/>
    </location>
</feature>
<feature type="domain" description="Ketosynthase family 3 (KS3)" evidence="1">
    <location>
        <begin position="2"/>
        <end position="438"/>
    </location>
</feature>
<feature type="active site" description="For beta-ketoacyl synthase activity" evidence="1">
    <location>
        <position position="187"/>
    </location>
</feature>
<feature type="active site" description="For beta-ketoacyl synthase activity" evidence="1">
    <location>
        <position position="322"/>
    </location>
</feature>
<feature type="active site" description="For beta-ketoacyl synthase activity" evidence="1">
    <location>
        <position position="362"/>
    </location>
</feature>
<name>CEM1_YEAST</name>
<accession>P39525</accession>
<accession>D3DLW6</accession>
<keyword id="KW-0275">Fatty acid biosynthesis</keyword>
<keyword id="KW-0276">Fatty acid metabolism</keyword>
<keyword id="KW-0444">Lipid biosynthesis</keyword>
<keyword id="KW-0443">Lipid metabolism</keyword>
<keyword id="KW-0496">Mitochondrion</keyword>
<keyword id="KW-1185">Reference proteome</keyword>
<keyword id="KW-0808">Transferase</keyword>
<comment type="function">
    <text>Possibly involved in the synthesis of a specialized molecule, probably related to a fatty acid, which is essential for mitochondrial respiration. Is essential for oxygen uptake and the presence of cytochromes A and B.</text>
</comment>
<comment type="catalytic activity">
    <reaction>
        <text>a fatty acyl-[ACP] + malonyl-[ACP] + H(+) = a 3-oxoacyl-[ACP] + holo-[ACP] + CO2</text>
        <dbReference type="Rhea" id="RHEA:22836"/>
        <dbReference type="Rhea" id="RHEA-COMP:9623"/>
        <dbReference type="Rhea" id="RHEA-COMP:9685"/>
        <dbReference type="Rhea" id="RHEA-COMP:9916"/>
        <dbReference type="Rhea" id="RHEA-COMP:14125"/>
        <dbReference type="ChEBI" id="CHEBI:15378"/>
        <dbReference type="ChEBI" id="CHEBI:16526"/>
        <dbReference type="ChEBI" id="CHEBI:64479"/>
        <dbReference type="ChEBI" id="CHEBI:78449"/>
        <dbReference type="ChEBI" id="CHEBI:78776"/>
        <dbReference type="ChEBI" id="CHEBI:138651"/>
        <dbReference type="EC" id="2.3.1.41"/>
    </reaction>
</comment>
<comment type="subcellular location">
    <subcellularLocation>
        <location evidence="2 4">Mitochondrion</location>
    </subcellularLocation>
</comment>
<comment type="miscellaneous">
    <text evidence="3">Present with 1660 molecules/cell in log phase SD medium.</text>
</comment>
<comment type="similarity">
    <text evidence="5">Belongs to the thiolase-like superfamily. Beta-ketoacyl-ACP synthases family.</text>
</comment>